<evidence type="ECO:0000255" key="1"/>
<evidence type="ECO:0000255" key="2">
    <source>
        <dbReference type="PROSITE-ProRule" id="PRU00805"/>
    </source>
</evidence>
<evidence type="ECO:0000269" key="3">
    <source>
    </source>
</evidence>
<evidence type="ECO:0000269" key="4">
    <source>
    </source>
</evidence>
<evidence type="ECO:0000269" key="5">
    <source>
    </source>
</evidence>
<evidence type="ECO:0000269" key="6">
    <source>
    </source>
</evidence>
<evidence type="ECO:0000305" key="7"/>
<gene>
    <name type="primary">GA2OX1</name>
    <name type="ordered locus">At1g78440</name>
    <name type="ORF">F3F9.5</name>
</gene>
<sequence length="329" mass="36732">MAVLSKPVAIPKSGFSLIPVIDMSDPESKHALVKACEDFGFFKVINHGVSAELVSVLEHETVDFFSLPKSEKTQVAGYPFGYGNSKIGRNGDVGWVEYLLMNANHDSGSGPLFPSLLKSPGTFRNALEEYTTSVRKMTFDVLEKITDGLGIKPRNTLSKLVSDQNTDSILRLNHYPPCPLSNKKTNGGKNVIGFGEHTDPQIISVLRSNNTSGLQINLNDGSWISVPPDHTSFFFNVGDSLQVMTNGRFKSVRHRVLANCKKSRVSMIYFAGPSLTQRIAPLTCLIDNEDERLYEEFTWSEYKNSTYNSRLSDNRLQQFERKTIKNLLN</sequence>
<organism>
    <name type="scientific">Arabidopsis thaliana</name>
    <name type="common">Mouse-ear cress</name>
    <dbReference type="NCBI Taxonomy" id="3702"/>
    <lineage>
        <taxon>Eukaryota</taxon>
        <taxon>Viridiplantae</taxon>
        <taxon>Streptophyta</taxon>
        <taxon>Embryophyta</taxon>
        <taxon>Tracheophyta</taxon>
        <taxon>Spermatophyta</taxon>
        <taxon>Magnoliopsida</taxon>
        <taxon>eudicotyledons</taxon>
        <taxon>Gunneridae</taxon>
        <taxon>Pentapetalae</taxon>
        <taxon>rosids</taxon>
        <taxon>malvids</taxon>
        <taxon>Brassicales</taxon>
        <taxon>Brassicaceae</taxon>
        <taxon>Camelineae</taxon>
        <taxon>Arabidopsis</taxon>
    </lineage>
</organism>
<keyword id="KW-0223">Dioxygenase</keyword>
<keyword id="KW-0408">Iron</keyword>
<keyword id="KW-0479">Metal-binding</keyword>
<keyword id="KW-0560">Oxidoreductase</keyword>
<keyword id="KW-1185">Reference proteome</keyword>
<protein>
    <recommendedName>
        <fullName>Gibberellin 2-beta-dioxygenase 1</fullName>
        <ecNumber>1.14.11.13</ecNumber>
    </recommendedName>
    <alternativeName>
        <fullName>GA 2-oxidase 1</fullName>
    </alternativeName>
    <alternativeName>
        <fullName>Gibberellin 2-beta-hydroxylase 1</fullName>
    </alternativeName>
    <alternativeName>
        <fullName>Gibberellin 2-oxidase 1</fullName>
    </alternativeName>
</protein>
<reference key="1">
    <citation type="journal article" date="1999" name="Proc. Natl. Acad. Sci. U.S.A.">
        <title>Molecular cloning and functional expression of gibberellin 2-oxidases, multifunctional enzymes involved in gibberellin deactivation.</title>
        <authorList>
            <person name="Thomas S.G."/>
            <person name="Phillips A.L."/>
            <person name="Hedden P."/>
        </authorList>
    </citation>
    <scope>NUCLEOTIDE SEQUENCE [MRNA]</scope>
    <scope>FUNCTION</scope>
    <scope>TISSUE SPECIFICITY</scope>
    <scope>INDUCTION</scope>
    <source>
        <strain>cv. Columbia</strain>
    </source>
</reference>
<reference key="2">
    <citation type="journal article" date="2000" name="Nature">
        <title>Sequence and analysis of chromosome 1 of the plant Arabidopsis thaliana.</title>
        <authorList>
            <person name="Theologis A."/>
            <person name="Ecker J.R."/>
            <person name="Palm C.J."/>
            <person name="Federspiel N.A."/>
            <person name="Kaul S."/>
            <person name="White O."/>
            <person name="Alonso J."/>
            <person name="Altafi H."/>
            <person name="Araujo R."/>
            <person name="Bowman C.L."/>
            <person name="Brooks S.Y."/>
            <person name="Buehler E."/>
            <person name="Chan A."/>
            <person name="Chao Q."/>
            <person name="Chen H."/>
            <person name="Cheuk R.F."/>
            <person name="Chin C.W."/>
            <person name="Chung M.K."/>
            <person name="Conn L."/>
            <person name="Conway A.B."/>
            <person name="Conway A.R."/>
            <person name="Creasy T.H."/>
            <person name="Dewar K."/>
            <person name="Dunn P."/>
            <person name="Etgu P."/>
            <person name="Feldblyum T.V."/>
            <person name="Feng J.-D."/>
            <person name="Fong B."/>
            <person name="Fujii C.Y."/>
            <person name="Gill J.E."/>
            <person name="Goldsmith A.D."/>
            <person name="Haas B."/>
            <person name="Hansen N.F."/>
            <person name="Hughes B."/>
            <person name="Huizar L."/>
            <person name="Hunter J.L."/>
            <person name="Jenkins J."/>
            <person name="Johnson-Hopson C."/>
            <person name="Khan S."/>
            <person name="Khaykin E."/>
            <person name="Kim C.J."/>
            <person name="Koo H.L."/>
            <person name="Kremenetskaia I."/>
            <person name="Kurtz D.B."/>
            <person name="Kwan A."/>
            <person name="Lam B."/>
            <person name="Langin-Hooper S."/>
            <person name="Lee A."/>
            <person name="Lee J.M."/>
            <person name="Lenz C.A."/>
            <person name="Li J.H."/>
            <person name="Li Y.-P."/>
            <person name="Lin X."/>
            <person name="Liu S.X."/>
            <person name="Liu Z.A."/>
            <person name="Luros J.S."/>
            <person name="Maiti R."/>
            <person name="Marziali A."/>
            <person name="Militscher J."/>
            <person name="Miranda M."/>
            <person name="Nguyen M."/>
            <person name="Nierman W.C."/>
            <person name="Osborne B.I."/>
            <person name="Pai G."/>
            <person name="Peterson J."/>
            <person name="Pham P.K."/>
            <person name="Rizzo M."/>
            <person name="Rooney T."/>
            <person name="Rowley D."/>
            <person name="Sakano H."/>
            <person name="Salzberg S.L."/>
            <person name="Schwartz J.R."/>
            <person name="Shinn P."/>
            <person name="Southwick A.M."/>
            <person name="Sun H."/>
            <person name="Tallon L.J."/>
            <person name="Tambunga G."/>
            <person name="Toriumi M.J."/>
            <person name="Town C.D."/>
            <person name="Utterback T."/>
            <person name="Van Aken S."/>
            <person name="Vaysberg M."/>
            <person name="Vysotskaia V.S."/>
            <person name="Walker M."/>
            <person name="Wu D."/>
            <person name="Yu G."/>
            <person name="Fraser C.M."/>
            <person name="Venter J.C."/>
            <person name="Davis R.W."/>
        </authorList>
    </citation>
    <scope>NUCLEOTIDE SEQUENCE [LARGE SCALE GENOMIC DNA]</scope>
    <source>
        <strain>cv. Columbia</strain>
    </source>
</reference>
<reference key="3">
    <citation type="journal article" date="2017" name="Plant J.">
        <title>Araport11: a complete reannotation of the Arabidopsis thaliana reference genome.</title>
        <authorList>
            <person name="Cheng C.Y."/>
            <person name="Krishnakumar V."/>
            <person name="Chan A.P."/>
            <person name="Thibaud-Nissen F."/>
            <person name="Schobel S."/>
            <person name="Town C.D."/>
        </authorList>
    </citation>
    <scope>GENOME REANNOTATION</scope>
    <source>
        <strain>cv. Columbia</strain>
    </source>
</reference>
<reference key="4">
    <citation type="journal article" date="2003" name="Science">
        <title>Empirical analysis of transcriptional activity in the Arabidopsis genome.</title>
        <authorList>
            <person name="Yamada K."/>
            <person name="Lim J."/>
            <person name="Dale J.M."/>
            <person name="Chen H."/>
            <person name="Shinn P."/>
            <person name="Palm C.J."/>
            <person name="Southwick A.M."/>
            <person name="Wu H.C."/>
            <person name="Kim C.J."/>
            <person name="Nguyen M."/>
            <person name="Pham P.K."/>
            <person name="Cheuk R.F."/>
            <person name="Karlin-Newmann G."/>
            <person name="Liu S.X."/>
            <person name="Lam B."/>
            <person name="Sakano H."/>
            <person name="Wu T."/>
            <person name="Yu G."/>
            <person name="Miranda M."/>
            <person name="Quach H.L."/>
            <person name="Tripp M."/>
            <person name="Chang C.H."/>
            <person name="Lee J.M."/>
            <person name="Toriumi M.J."/>
            <person name="Chan M.M."/>
            <person name="Tang C.C."/>
            <person name="Onodera C.S."/>
            <person name="Deng J.M."/>
            <person name="Akiyama K."/>
            <person name="Ansari Y."/>
            <person name="Arakawa T."/>
            <person name="Banh J."/>
            <person name="Banno F."/>
            <person name="Bowser L."/>
            <person name="Brooks S.Y."/>
            <person name="Carninci P."/>
            <person name="Chao Q."/>
            <person name="Choy N."/>
            <person name="Enju A."/>
            <person name="Goldsmith A.D."/>
            <person name="Gurjal M."/>
            <person name="Hansen N.F."/>
            <person name="Hayashizaki Y."/>
            <person name="Johnson-Hopson C."/>
            <person name="Hsuan V.W."/>
            <person name="Iida K."/>
            <person name="Karnes M."/>
            <person name="Khan S."/>
            <person name="Koesema E."/>
            <person name="Ishida J."/>
            <person name="Jiang P.X."/>
            <person name="Jones T."/>
            <person name="Kawai J."/>
            <person name="Kamiya A."/>
            <person name="Meyers C."/>
            <person name="Nakajima M."/>
            <person name="Narusaka M."/>
            <person name="Seki M."/>
            <person name="Sakurai T."/>
            <person name="Satou M."/>
            <person name="Tamse R."/>
            <person name="Vaysberg M."/>
            <person name="Wallender E.K."/>
            <person name="Wong C."/>
            <person name="Yamamura Y."/>
            <person name="Yuan S."/>
            <person name="Shinozaki K."/>
            <person name="Davis R.W."/>
            <person name="Theologis A."/>
            <person name="Ecker J.R."/>
        </authorList>
    </citation>
    <scope>NUCLEOTIDE SEQUENCE [LARGE SCALE MRNA]</scope>
    <source>
        <strain>cv. Columbia</strain>
    </source>
</reference>
<reference key="5">
    <citation type="submission" date="2002-03" db="EMBL/GenBank/DDBJ databases">
        <title>Full-length cDNA from Arabidopsis thaliana.</title>
        <authorList>
            <person name="Brover V.V."/>
            <person name="Troukhan M.E."/>
            <person name="Alexandrov N.A."/>
            <person name="Lu Y.-P."/>
            <person name="Flavell R.B."/>
            <person name="Feldmann K.A."/>
        </authorList>
    </citation>
    <scope>NUCLEOTIDE SEQUENCE [LARGE SCALE MRNA]</scope>
</reference>
<reference key="6">
    <citation type="journal article" date="2005" name="Curr. Biol.">
        <title>KNOX action in Arabidopsis is mediated by coordinate regulation of cytokinin and gibberellin activities.</title>
        <authorList>
            <person name="Jasinski S."/>
            <person name="Piazza P."/>
            <person name="Craft J."/>
            <person name="Hay A."/>
            <person name="Woolley L."/>
            <person name="Rieu I."/>
            <person name="Phillips A."/>
            <person name="Hedden P."/>
            <person name="Tsiantis M."/>
        </authorList>
    </citation>
    <scope>TISSUE SPECIFICITY</scope>
</reference>
<reference key="7">
    <citation type="journal article" date="2006" name="Plant Physiol.">
        <title>Transcriptional regulation of gibberellin metabolism genes by auxin signaling in Arabidopsis.</title>
        <authorList>
            <person name="Frigerio M."/>
            <person name="Alabadi D."/>
            <person name="Perez-Gomez J."/>
            <person name="Garcia-Carcel L."/>
            <person name="Phillips A.L."/>
            <person name="Hedden P."/>
            <person name="Blazquez M.A."/>
        </authorList>
    </citation>
    <scope>INDUCTION BY AUXIN</scope>
</reference>
<reference key="8">
    <citation type="journal article" date="2008" name="Plant Cell">
        <title>Genetic analysis reveals that C19-GA 2-oxidation is a major gibberellin inactivation pathway in Arabidopsis.</title>
        <authorList>
            <person name="Rieu I."/>
            <person name="Eriksson S."/>
            <person name="Powers S.J."/>
            <person name="Gong F."/>
            <person name="Griffiths J."/>
            <person name="Woolley L."/>
            <person name="Benlloch R."/>
            <person name="Nilsson O."/>
            <person name="Thomas S.G."/>
            <person name="Hedden P."/>
            <person name="Phillips A.L."/>
        </authorList>
    </citation>
    <scope>FUNCTION</scope>
</reference>
<reference key="9">
    <citation type="journal article" date="2011" name="Gene">
        <title>Evolutionary analysis of three gibberellin oxidase genes in rice, Arabidopsis, and soybean.</title>
        <authorList>
            <person name="Han F."/>
            <person name="Zhu B."/>
        </authorList>
    </citation>
    <scope>GENE FAMILY</scope>
</reference>
<name>G2OX1_ARATH</name>
<comment type="function">
    <text evidence="3 6">Catalyzes the 2-beta-hydroxylation of several biologically active gibberellins, leading to the homeostatic regulation of their endogenous level. Catabolism of gibberellins (GAs) plays a central role in plant development. Converts GA9/GA20 to GA51/GA29 and GA4/GA1 to GA34/GA8.</text>
</comment>
<comment type="catalytic activity">
    <reaction>
        <text>gibberellin A1 + 2-oxoglutarate + O2 = gibberellin A8 + succinate + CO2</text>
        <dbReference type="Rhea" id="RHEA:15005"/>
        <dbReference type="ChEBI" id="CHEBI:15379"/>
        <dbReference type="ChEBI" id="CHEBI:16526"/>
        <dbReference type="ChEBI" id="CHEBI:16810"/>
        <dbReference type="ChEBI" id="CHEBI:30031"/>
        <dbReference type="ChEBI" id="CHEBI:58524"/>
        <dbReference type="ChEBI" id="CHEBI:58594"/>
        <dbReference type="EC" id="1.14.11.13"/>
    </reaction>
</comment>
<comment type="cofactor">
    <cofactor evidence="2">
        <name>Fe(2+)</name>
        <dbReference type="ChEBI" id="CHEBI:29033"/>
    </cofactor>
    <text evidence="2">Binds 1 Fe(2+) ion per subunit.</text>
</comment>
<comment type="pathway">
    <text>Plant hormone biosynthesis; gibberellin biosynthesis.</text>
</comment>
<comment type="tissue specificity">
    <text evidence="3 4">Preferentially expressed in flowers, siliques, and upper stems. Not expressed in the apex.</text>
</comment>
<comment type="induction">
    <text evidence="3 5">By gibberellin A3 (GA3). Not regulated by auxin.</text>
</comment>
<comment type="similarity">
    <text evidence="7">Belongs to the iron/ascorbate-dependent oxidoreductase family. GA2OX subfamily.</text>
</comment>
<accession>Q8LEA2</accession>
<accession>Q9XFR8</accession>
<dbReference type="EC" id="1.14.11.13"/>
<dbReference type="EMBL" id="AJ132435">
    <property type="protein sequence ID" value="CAB41007.1"/>
    <property type="molecule type" value="mRNA"/>
</dbReference>
<dbReference type="EMBL" id="AC013430">
    <property type="protein sequence ID" value="AAF71795.1"/>
    <property type="molecule type" value="Genomic_DNA"/>
</dbReference>
<dbReference type="EMBL" id="CP002684">
    <property type="protein sequence ID" value="AEE36106.1"/>
    <property type="molecule type" value="Genomic_DNA"/>
</dbReference>
<dbReference type="EMBL" id="BT002763">
    <property type="protein sequence ID" value="AAO22591.1"/>
    <property type="molecule type" value="mRNA"/>
</dbReference>
<dbReference type="EMBL" id="AY085539">
    <property type="protein sequence ID" value="AAM62763.1"/>
    <property type="molecule type" value="mRNA"/>
</dbReference>
<dbReference type="PIR" id="T52579">
    <property type="entry name" value="T52579"/>
</dbReference>
<dbReference type="SMR" id="Q8LEA2"/>
<dbReference type="BioGRID" id="29399">
    <property type="interactions" value="1"/>
</dbReference>
<dbReference type="FunCoup" id="Q8LEA2">
    <property type="interactions" value="20"/>
</dbReference>
<dbReference type="STRING" id="3702.Q8LEA2"/>
<dbReference type="PaxDb" id="3702-AT1G78440.1"/>
<dbReference type="EnsemblPlants" id="AT1G78440.1">
    <property type="protein sequence ID" value="AT1G78440.1"/>
    <property type="gene ID" value="AT1G78440"/>
</dbReference>
<dbReference type="GeneID" id="844180"/>
<dbReference type="Gramene" id="AT1G78440.1">
    <property type="protein sequence ID" value="AT1G78440.1"/>
    <property type="gene ID" value="AT1G78440"/>
</dbReference>
<dbReference type="KEGG" id="ath:AT1G78440"/>
<dbReference type="Araport" id="AT1G78440"/>
<dbReference type="TAIR" id="AT1G78440">
    <property type="gene designation" value="ATGA2OX1"/>
</dbReference>
<dbReference type="eggNOG" id="KOG0143">
    <property type="taxonomic scope" value="Eukaryota"/>
</dbReference>
<dbReference type="HOGENOM" id="CLU_010119_16_3_1"/>
<dbReference type="InParanoid" id="Q8LEA2"/>
<dbReference type="OMA" id="SKANNCK"/>
<dbReference type="OrthoDB" id="288590at2759"/>
<dbReference type="PhylomeDB" id="Q8LEA2"/>
<dbReference type="BioCyc" id="ARA:AT1G78440-MONOMER"/>
<dbReference type="BioCyc" id="MetaCyc:AT1G78440-MONOMER"/>
<dbReference type="BRENDA" id="1.14.11.13">
    <property type="organism ID" value="399"/>
</dbReference>
<dbReference type="UniPathway" id="UPA00390"/>
<dbReference type="PRO" id="PR:Q8LEA2"/>
<dbReference type="Proteomes" id="UP000006548">
    <property type="component" value="Chromosome 1"/>
</dbReference>
<dbReference type="ExpressionAtlas" id="Q8LEA2">
    <property type="expression patterns" value="baseline and differential"/>
</dbReference>
<dbReference type="GO" id="GO:0045543">
    <property type="term" value="F:gibberellin 2-beta-dioxygenase activity"/>
    <property type="evidence" value="ECO:0007669"/>
    <property type="project" value="UniProtKB-EC"/>
</dbReference>
<dbReference type="GO" id="GO:0046872">
    <property type="term" value="F:metal ion binding"/>
    <property type="evidence" value="ECO:0007669"/>
    <property type="project" value="UniProtKB-KW"/>
</dbReference>
<dbReference type="GO" id="GO:0009686">
    <property type="term" value="P:gibberellin biosynthetic process"/>
    <property type="evidence" value="ECO:0007669"/>
    <property type="project" value="UniProtKB-UniPathway"/>
</dbReference>
<dbReference type="FunFam" id="2.60.120.330:FF:000014">
    <property type="entry name" value="Gibberellin 2-beta-dioxygenase 1"/>
    <property type="match status" value="1"/>
</dbReference>
<dbReference type="Gene3D" id="2.60.120.330">
    <property type="entry name" value="B-lactam Antibiotic, Isopenicillin N Synthase, Chain"/>
    <property type="match status" value="1"/>
</dbReference>
<dbReference type="InterPro" id="IPR026992">
    <property type="entry name" value="DIOX_N"/>
</dbReference>
<dbReference type="InterPro" id="IPR044861">
    <property type="entry name" value="IPNS-like_FE2OG_OXY"/>
</dbReference>
<dbReference type="InterPro" id="IPR027443">
    <property type="entry name" value="IPNS-like_sf"/>
</dbReference>
<dbReference type="InterPro" id="IPR050231">
    <property type="entry name" value="Iron_ascorbate_oxido_reductase"/>
</dbReference>
<dbReference type="InterPro" id="IPR005123">
    <property type="entry name" value="Oxoglu/Fe-dep_dioxygenase_dom"/>
</dbReference>
<dbReference type="PANTHER" id="PTHR47990">
    <property type="entry name" value="2-OXOGLUTARATE (2OG) AND FE(II)-DEPENDENT OXYGENASE SUPERFAMILY PROTEIN-RELATED"/>
    <property type="match status" value="1"/>
</dbReference>
<dbReference type="Pfam" id="PF03171">
    <property type="entry name" value="2OG-FeII_Oxy"/>
    <property type="match status" value="1"/>
</dbReference>
<dbReference type="Pfam" id="PF14226">
    <property type="entry name" value="DIOX_N"/>
    <property type="match status" value="1"/>
</dbReference>
<dbReference type="PRINTS" id="PR00682">
    <property type="entry name" value="IPNSYNTHASE"/>
</dbReference>
<dbReference type="SUPFAM" id="SSF51197">
    <property type="entry name" value="Clavaminate synthase-like"/>
    <property type="match status" value="1"/>
</dbReference>
<dbReference type="PROSITE" id="PS51471">
    <property type="entry name" value="FE2OG_OXY"/>
    <property type="match status" value="1"/>
</dbReference>
<proteinExistence type="evidence at transcript level"/>
<feature type="chain" id="PRO_0000067305" description="Gibberellin 2-beta-dioxygenase 1">
    <location>
        <begin position="1"/>
        <end position="329"/>
    </location>
</feature>
<feature type="domain" description="Fe2OG dioxygenase" evidence="2">
    <location>
        <begin position="165"/>
        <end position="273"/>
    </location>
</feature>
<feature type="active site" evidence="1">
    <location>
        <position position="264"/>
    </location>
</feature>
<feature type="binding site" evidence="2">
    <location>
        <position position="197"/>
    </location>
    <ligand>
        <name>Fe cation</name>
        <dbReference type="ChEBI" id="CHEBI:24875"/>
    </ligand>
</feature>
<feature type="binding site" evidence="2">
    <location>
        <position position="199"/>
    </location>
    <ligand>
        <name>Fe cation</name>
        <dbReference type="ChEBI" id="CHEBI:24875"/>
    </ligand>
</feature>
<feature type="binding site" evidence="2">
    <location>
        <position position="254"/>
    </location>
    <ligand>
        <name>Fe cation</name>
        <dbReference type="ChEBI" id="CHEBI:24875"/>
    </ligand>
</feature>
<feature type="binding site" evidence="2">
    <location>
        <position position="264"/>
    </location>
    <ligand>
        <name>2-oxoglutarate</name>
        <dbReference type="ChEBI" id="CHEBI:16810"/>
    </ligand>
</feature>
<feature type="sequence conflict" description="In Ref. 5; AAM62763." evidence="7" ref="5">
    <original>I</original>
    <variation>V</variation>
    <location>
        <position position="10"/>
    </location>
</feature>
<feature type="sequence conflict" description="In Ref. 5; AAM62763." evidence="7" ref="5">
    <original>F</original>
    <variation>L</variation>
    <location>
        <position position="80"/>
    </location>
</feature>
<feature type="sequence conflict" description="In Ref. 5; AAM62763." evidence="7" ref="5">
    <original>H</original>
    <variation>L</variation>
    <location>
        <position position="105"/>
    </location>
</feature>
<feature type="sequence conflict" description="In Ref. 5; AAM62763." evidence="7" ref="5">
    <original>F</original>
    <variation>C</variation>
    <location>
        <position position="139"/>
    </location>
</feature>